<organism>
    <name type="scientific">Roseobacter denitrificans (strain ATCC 33942 / OCh 114)</name>
    <name type="common">Erythrobacter sp. (strain OCh 114)</name>
    <name type="synonym">Roseobacter denitrificans</name>
    <dbReference type="NCBI Taxonomy" id="375451"/>
    <lineage>
        <taxon>Bacteria</taxon>
        <taxon>Pseudomonadati</taxon>
        <taxon>Pseudomonadota</taxon>
        <taxon>Alphaproteobacteria</taxon>
        <taxon>Rhodobacterales</taxon>
        <taxon>Roseobacteraceae</taxon>
        <taxon>Roseobacter</taxon>
    </lineage>
</organism>
<accession>P26279</accession>
<accession>Q16DV5</accession>
<evidence type="ECO:0000250" key="1"/>
<evidence type="ECO:0000305" key="2"/>
<protein>
    <recommendedName>
        <fullName>Reaction center protein M chain</fullName>
    </recommendedName>
    <alternativeName>
        <fullName>Photosynthetic reaction center M subunit</fullName>
    </alternativeName>
</protein>
<reference key="1">
    <citation type="journal article" date="1991" name="Mol. Microbiol.">
        <title>Organization of the genes coding for the reaction-centre L and M subunits and B870 antenna polypeptides alpha and beta from the aerobic photosynthetic bacterium Erythrobacter species OCH114.</title>
        <authorList>
            <person name="Liebetanz R."/>
            <person name="Hornberger U."/>
            <person name="Drews G."/>
        </authorList>
    </citation>
    <scope>NUCLEOTIDE SEQUENCE [GENOMIC DNA]</scope>
</reference>
<reference key="2">
    <citation type="journal article" date="2007" name="J. Bacteriol.">
        <title>The complete genome sequence of Roseobacter denitrificans reveals a mixotrophic rather than photosynthetic metabolism.</title>
        <authorList>
            <person name="Swingley W.D."/>
            <person name="Sadekar S."/>
            <person name="Mastrian S.D."/>
            <person name="Matthies H.J."/>
            <person name="Hao J."/>
            <person name="Ramos H."/>
            <person name="Acharya C.R."/>
            <person name="Conrad A.L."/>
            <person name="Taylor H.L."/>
            <person name="Dejesa L.C."/>
            <person name="Shah M.K."/>
            <person name="O'Huallachain M.E."/>
            <person name="Lince M.T."/>
            <person name="Blankenship R.E."/>
            <person name="Beatty J.T."/>
            <person name="Touchman J.W."/>
        </authorList>
    </citation>
    <scope>NUCLEOTIDE SEQUENCE [LARGE SCALE GENOMIC DNA]</scope>
    <source>
        <strain>ATCC 33942 / OCh 114</strain>
    </source>
</reference>
<feature type="chain" id="PRO_0000090413" description="Reaction center protein M chain">
    <location>
        <begin position="1"/>
        <end position="330"/>
    </location>
</feature>
<feature type="transmembrane region" description="Helical" evidence="1">
    <location>
        <begin position="57"/>
        <end position="83"/>
    </location>
</feature>
<feature type="transmembrane region" description="Helical" evidence="1">
    <location>
        <begin position="115"/>
        <end position="144"/>
    </location>
</feature>
<feature type="transmembrane region" description="Helical" evidence="1">
    <location>
        <begin position="147"/>
        <end position="172"/>
    </location>
</feature>
<feature type="transmembrane region" description="Helical" evidence="1">
    <location>
        <begin position="202"/>
        <end position="230"/>
    </location>
</feature>
<feature type="transmembrane region" description="Helical" evidence="1">
    <location>
        <begin position="264"/>
        <end position="290"/>
    </location>
</feature>
<feature type="binding site" description="axial binding residue" evidence="1">
    <location>
        <position position="185"/>
    </location>
    <ligand>
        <name>(7R,8Z)-bacteriochlorophyll b</name>
        <dbReference type="ChEBI" id="CHEBI:30034"/>
    </ligand>
    <ligandPart>
        <name>Mg</name>
        <dbReference type="ChEBI" id="CHEBI:25107"/>
    </ligandPart>
</feature>
<feature type="binding site" description="axial binding residue" evidence="1">
    <location>
        <position position="205"/>
    </location>
    <ligand>
        <name>(7R,8Z)-bacteriochlorophyll b</name>
        <dbReference type="ChEBI" id="CHEBI:30034"/>
    </ligand>
    <ligandPart>
        <name>Mg</name>
        <dbReference type="ChEBI" id="CHEBI:25107"/>
    </ligandPart>
</feature>
<feature type="binding site" evidence="1">
    <location>
        <position position="222"/>
    </location>
    <ligand>
        <name>Fe cation</name>
        <dbReference type="ChEBI" id="CHEBI:24875"/>
    </ligand>
</feature>
<feature type="binding site" evidence="1">
    <location>
        <position position="237"/>
    </location>
    <ligand>
        <name>Fe cation</name>
        <dbReference type="ChEBI" id="CHEBI:24875"/>
    </ligand>
</feature>
<feature type="binding site" evidence="1">
    <location>
        <position position="255"/>
    </location>
    <ligand>
        <name>a ubiquinone</name>
        <dbReference type="ChEBI" id="CHEBI:16389"/>
    </ligand>
</feature>
<feature type="binding site" evidence="1">
    <location>
        <position position="269"/>
    </location>
    <ligand>
        <name>Fe cation</name>
        <dbReference type="ChEBI" id="CHEBI:24875"/>
    </ligand>
</feature>
<dbReference type="EMBL" id="X57597">
    <property type="protein sequence ID" value="CAA40819.1"/>
    <property type="status" value="ALT_INIT"/>
    <property type="molecule type" value="Genomic_DNA"/>
</dbReference>
<dbReference type="EMBL" id="CP000362">
    <property type="protein sequence ID" value="ABG29838.1"/>
    <property type="status" value="ALT_INIT"/>
    <property type="molecule type" value="Genomic_DNA"/>
</dbReference>
<dbReference type="RefSeq" id="WP_011566460.1">
    <property type="nucleotide sequence ID" value="NZ_FOOO01000011.1"/>
</dbReference>
<dbReference type="SMR" id="P26279"/>
<dbReference type="STRING" id="375451.RD1_0103"/>
<dbReference type="KEGG" id="rde:RD1_0103"/>
<dbReference type="eggNOG" id="ENOG502Z87P">
    <property type="taxonomic scope" value="Bacteria"/>
</dbReference>
<dbReference type="HOGENOM" id="CLU_078782_0_0_5"/>
<dbReference type="OrthoDB" id="8555181at2"/>
<dbReference type="Proteomes" id="UP000007029">
    <property type="component" value="Chromosome"/>
</dbReference>
<dbReference type="GO" id="GO:0030077">
    <property type="term" value="C:plasma membrane light-harvesting complex"/>
    <property type="evidence" value="ECO:0007669"/>
    <property type="project" value="InterPro"/>
</dbReference>
<dbReference type="GO" id="GO:0042717">
    <property type="term" value="C:plasma membrane-derived chromatophore membrane"/>
    <property type="evidence" value="ECO:0007669"/>
    <property type="project" value="UniProtKB-SubCell"/>
</dbReference>
<dbReference type="GO" id="GO:0042314">
    <property type="term" value="F:bacteriochlorophyll binding"/>
    <property type="evidence" value="ECO:0007669"/>
    <property type="project" value="UniProtKB-KW"/>
</dbReference>
<dbReference type="GO" id="GO:0045156">
    <property type="term" value="F:electron transporter, transferring electrons within the cyclic electron transport pathway of photosynthesis activity"/>
    <property type="evidence" value="ECO:0007669"/>
    <property type="project" value="InterPro"/>
</dbReference>
<dbReference type="GO" id="GO:0046872">
    <property type="term" value="F:metal ion binding"/>
    <property type="evidence" value="ECO:0007669"/>
    <property type="project" value="UniProtKB-KW"/>
</dbReference>
<dbReference type="GO" id="GO:0009772">
    <property type="term" value="P:photosynthetic electron transport in photosystem II"/>
    <property type="evidence" value="ECO:0007669"/>
    <property type="project" value="InterPro"/>
</dbReference>
<dbReference type="Gene3D" id="1.20.85.10">
    <property type="entry name" value="Photosystem II protein D1-like"/>
    <property type="match status" value="2"/>
</dbReference>
<dbReference type="InterPro" id="IPR036854">
    <property type="entry name" value="Photo_II_D1/D2_sf"/>
</dbReference>
<dbReference type="InterPro" id="IPR000484">
    <property type="entry name" value="Photo_RC_L/M"/>
</dbReference>
<dbReference type="InterPro" id="IPR055265">
    <property type="entry name" value="Photo_RC_L/M_CS"/>
</dbReference>
<dbReference type="InterPro" id="IPR005781">
    <property type="entry name" value="Photo_RC_M"/>
</dbReference>
<dbReference type="NCBIfam" id="TIGR01115">
    <property type="entry name" value="pufM"/>
    <property type="match status" value="1"/>
</dbReference>
<dbReference type="Pfam" id="PF00124">
    <property type="entry name" value="Photo_RC"/>
    <property type="match status" value="1"/>
</dbReference>
<dbReference type="PRINTS" id="PR00256">
    <property type="entry name" value="REACTNCENTRE"/>
</dbReference>
<dbReference type="SUPFAM" id="SSF81483">
    <property type="entry name" value="Bacterial photosystem II reaction centre, L and M subunits"/>
    <property type="match status" value="1"/>
</dbReference>
<dbReference type="PROSITE" id="PS00244">
    <property type="entry name" value="REACTION_CENTER"/>
    <property type="match status" value="1"/>
</dbReference>
<gene>
    <name type="primary">pufM</name>
    <name type="ordered locus">RD1_0103</name>
</gene>
<proteinExistence type="inferred from homology"/>
<comment type="function">
    <text>The reaction center is a membrane-bound complex that mediates the initial photochemical event in the electron transfer process of photosynthesis.</text>
</comment>
<comment type="subunit">
    <text>Reaction center is composed of four bacteriochlorophylls, two bacteriopheophytins, two ubiquinones, one iron, and two highly hydrophobic polypeptide chains (designated L and M).</text>
</comment>
<comment type="subcellular location">
    <subcellularLocation>
        <location evidence="1">Cellular chromatophore membrane</location>
        <topology evidence="1">Multi-pass membrane protein</topology>
    </subcellularLocation>
</comment>
<comment type="similarity">
    <text evidence="2">Belongs to the reaction center PufL/M/PsbA/D family.</text>
</comment>
<comment type="sequence caution" evidence="2">
    <conflict type="erroneous initiation">
        <sequence resource="EMBL-CDS" id="ABG29838"/>
    </conflict>
</comment>
<comment type="sequence caution" evidence="2">
    <conflict type="erroneous initiation">
        <sequence resource="EMBL-CDS" id="CAA40819"/>
    </conflict>
</comment>
<keyword id="KW-0076">Bacteriochlorophyll</keyword>
<keyword id="KW-0148">Chlorophyll</keyword>
<keyword id="KW-0157">Chromophore</keyword>
<keyword id="KW-0249">Electron transport</keyword>
<keyword id="KW-0408">Iron</keyword>
<keyword id="KW-0460">Magnesium</keyword>
<keyword id="KW-0472">Membrane</keyword>
<keyword id="KW-0479">Metal-binding</keyword>
<keyword id="KW-0602">Photosynthesis</keyword>
<keyword id="KW-0674">Reaction center</keyword>
<keyword id="KW-1185">Reference proteome</keyword>
<keyword id="KW-0812">Transmembrane</keyword>
<keyword id="KW-1133">Transmembrane helix</keyword>
<keyword id="KW-0813">Transport</keyword>
<sequence length="330" mass="37671">MYPEYQNIFTQVQVRGTPEMGMDDAGNNMMEERVGKPFFSTLAGLFGNGQIGPYYFGWTSIVAFGTGIAWFVIVGFNMLAQVGWSIPQFIRQLFWLALEPPSPEYGLSMPPLNDGGWYIIASFFLLVSVMTWLLRAYLLAEQHKMGKHIFWGFAAAVWLFLVLGLFRPILMGSWSEAVPYGIFPHLDWTTAFSIRYGNLYYNPFHCLSIVFLYGSVLLFCMHGGTILAVTRYGGDRELEQIYDRGTATERAALFWRWTMGFNATMEGIHRWAWWFAVLTPITGGIGILLTGTVVDNWFIWAQEHHFAPMYDGSYGYEDYGSYEAFIGKEN</sequence>
<name>RCEM_ROSDO</name>